<feature type="chain" id="PRO_1000059904" description="DNA replication and repair protein RecF">
    <location>
        <begin position="1"/>
        <end position="374"/>
    </location>
</feature>
<feature type="binding site" evidence="1">
    <location>
        <begin position="30"/>
        <end position="37"/>
    </location>
    <ligand>
        <name>ATP</name>
        <dbReference type="ChEBI" id="CHEBI:30616"/>
    </ligand>
</feature>
<proteinExistence type="inferred from homology"/>
<reference key="1">
    <citation type="journal article" date="2011" name="PLoS Genet.">
        <title>The evolution of host specialization in the vertebrate gut symbiont Lactobacillus reuteri.</title>
        <authorList>
            <person name="Frese S.A."/>
            <person name="Benson A.K."/>
            <person name="Tannock G.W."/>
            <person name="Loach D.M."/>
            <person name="Kim J."/>
            <person name="Zhang M."/>
            <person name="Oh P.L."/>
            <person name="Heng N.C."/>
            <person name="Patil P.B."/>
            <person name="Juge N."/>
            <person name="Mackenzie D.A."/>
            <person name="Pearson B.M."/>
            <person name="Lapidus A."/>
            <person name="Dalin E."/>
            <person name="Tice H."/>
            <person name="Goltsman E."/>
            <person name="Land M."/>
            <person name="Hauser L."/>
            <person name="Ivanova N."/>
            <person name="Kyrpides N.C."/>
            <person name="Walter J."/>
        </authorList>
    </citation>
    <scope>NUCLEOTIDE SEQUENCE [LARGE SCALE GENOMIC DNA]</scope>
    <source>
        <strain>DSM 20016</strain>
    </source>
</reference>
<organism>
    <name type="scientific">Limosilactobacillus reuteri (strain DSM 20016)</name>
    <name type="common">Lactobacillus reuteri</name>
    <dbReference type="NCBI Taxonomy" id="557436"/>
    <lineage>
        <taxon>Bacteria</taxon>
        <taxon>Bacillati</taxon>
        <taxon>Bacillota</taxon>
        <taxon>Bacilli</taxon>
        <taxon>Lactobacillales</taxon>
        <taxon>Lactobacillaceae</taxon>
        <taxon>Limosilactobacillus</taxon>
    </lineage>
</organism>
<gene>
    <name evidence="1" type="primary">recF</name>
    <name type="ordered locus">Lreu_0004</name>
</gene>
<evidence type="ECO:0000255" key="1">
    <source>
        <dbReference type="HAMAP-Rule" id="MF_00365"/>
    </source>
</evidence>
<accession>A5VHF6</accession>
<comment type="function">
    <text evidence="1">The RecF protein is involved in DNA metabolism; it is required for DNA replication and normal SOS inducibility. RecF binds preferentially to single-stranded, linear DNA. It also seems to bind ATP.</text>
</comment>
<comment type="subcellular location">
    <subcellularLocation>
        <location evidence="1">Cytoplasm</location>
    </subcellularLocation>
</comment>
<comment type="similarity">
    <text evidence="1">Belongs to the RecF family.</text>
</comment>
<protein>
    <recommendedName>
        <fullName evidence="1">DNA replication and repair protein RecF</fullName>
    </recommendedName>
</protein>
<keyword id="KW-0067">ATP-binding</keyword>
<keyword id="KW-0963">Cytoplasm</keyword>
<keyword id="KW-0227">DNA damage</keyword>
<keyword id="KW-0234">DNA repair</keyword>
<keyword id="KW-0235">DNA replication</keyword>
<keyword id="KW-0238">DNA-binding</keyword>
<keyword id="KW-0547">Nucleotide-binding</keyword>
<keyword id="KW-1185">Reference proteome</keyword>
<keyword id="KW-0742">SOS response</keyword>
<name>RECF_LIMRD</name>
<dbReference type="EMBL" id="CP000705">
    <property type="protein sequence ID" value="ABQ82280.1"/>
    <property type="molecule type" value="Genomic_DNA"/>
</dbReference>
<dbReference type="RefSeq" id="WP_003669488.1">
    <property type="nucleotide sequence ID" value="NC_009513.1"/>
</dbReference>
<dbReference type="SMR" id="A5VHF6"/>
<dbReference type="STRING" id="557436.Lreu_0004"/>
<dbReference type="KEGG" id="lre:Lreu_0004"/>
<dbReference type="PATRIC" id="fig|557436.17.peg.513"/>
<dbReference type="eggNOG" id="COG1195">
    <property type="taxonomic scope" value="Bacteria"/>
</dbReference>
<dbReference type="HOGENOM" id="CLU_040267_0_1_9"/>
<dbReference type="Proteomes" id="UP000001991">
    <property type="component" value="Chromosome"/>
</dbReference>
<dbReference type="GO" id="GO:0005737">
    <property type="term" value="C:cytoplasm"/>
    <property type="evidence" value="ECO:0007669"/>
    <property type="project" value="UniProtKB-SubCell"/>
</dbReference>
<dbReference type="GO" id="GO:0005524">
    <property type="term" value="F:ATP binding"/>
    <property type="evidence" value="ECO:0007669"/>
    <property type="project" value="UniProtKB-UniRule"/>
</dbReference>
<dbReference type="GO" id="GO:0003697">
    <property type="term" value="F:single-stranded DNA binding"/>
    <property type="evidence" value="ECO:0007669"/>
    <property type="project" value="UniProtKB-UniRule"/>
</dbReference>
<dbReference type="GO" id="GO:0006260">
    <property type="term" value="P:DNA replication"/>
    <property type="evidence" value="ECO:0007669"/>
    <property type="project" value="UniProtKB-UniRule"/>
</dbReference>
<dbReference type="GO" id="GO:0000731">
    <property type="term" value="P:DNA synthesis involved in DNA repair"/>
    <property type="evidence" value="ECO:0007669"/>
    <property type="project" value="TreeGrafter"/>
</dbReference>
<dbReference type="GO" id="GO:0006302">
    <property type="term" value="P:double-strand break repair"/>
    <property type="evidence" value="ECO:0007669"/>
    <property type="project" value="TreeGrafter"/>
</dbReference>
<dbReference type="GO" id="GO:0009432">
    <property type="term" value="P:SOS response"/>
    <property type="evidence" value="ECO:0007669"/>
    <property type="project" value="UniProtKB-UniRule"/>
</dbReference>
<dbReference type="CDD" id="cd03242">
    <property type="entry name" value="ABC_RecF"/>
    <property type="match status" value="1"/>
</dbReference>
<dbReference type="Gene3D" id="3.40.50.300">
    <property type="entry name" value="P-loop containing nucleotide triphosphate hydrolases"/>
    <property type="match status" value="1"/>
</dbReference>
<dbReference type="Gene3D" id="1.20.1050.90">
    <property type="entry name" value="RecF/RecN/SMC, N-terminal domain"/>
    <property type="match status" value="1"/>
</dbReference>
<dbReference type="HAMAP" id="MF_00365">
    <property type="entry name" value="RecF"/>
    <property type="match status" value="1"/>
</dbReference>
<dbReference type="InterPro" id="IPR001238">
    <property type="entry name" value="DNA-binding_RecF"/>
</dbReference>
<dbReference type="InterPro" id="IPR018078">
    <property type="entry name" value="DNA-binding_RecF_CS"/>
</dbReference>
<dbReference type="InterPro" id="IPR027417">
    <property type="entry name" value="P-loop_NTPase"/>
</dbReference>
<dbReference type="InterPro" id="IPR003395">
    <property type="entry name" value="RecF/RecN/SMC_N"/>
</dbReference>
<dbReference type="InterPro" id="IPR042174">
    <property type="entry name" value="RecF_2"/>
</dbReference>
<dbReference type="NCBIfam" id="TIGR00611">
    <property type="entry name" value="recf"/>
    <property type="match status" value="1"/>
</dbReference>
<dbReference type="PANTHER" id="PTHR32182">
    <property type="entry name" value="DNA REPLICATION AND REPAIR PROTEIN RECF"/>
    <property type="match status" value="1"/>
</dbReference>
<dbReference type="PANTHER" id="PTHR32182:SF0">
    <property type="entry name" value="DNA REPLICATION AND REPAIR PROTEIN RECF"/>
    <property type="match status" value="1"/>
</dbReference>
<dbReference type="Pfam" id="PF02463">
    <property type="entry name" value="SMC_N"/>
    <property type="match status" value="1"/>
</dbReference>
<dbReference type="SUPFAM" id="SSF52540">
    <property type="entry name" value="P-loop containing nucleoside triphosphate hydrolases"/>
    <property type="match status" value="1"/>
</dbReference>
<dbReference type="PROSITE" id="PS00617">
    <property type="entry name" value="RECF_1"/>
    <property type="match status" value="1"/>
</dbReference>
<dbReference type="PROSITE" id="PS00618">
    <property type="entry name" value="RECF_2"/>
    <property type="match status" value="1"/>
</dbReference>
<sequence>MILTELHLHHFRNYQDLTVHFNPGVNVLIGHNAQGKTNMLEAIYVLSLTKSHRTSNDHELINWQEKSALISGTVEKSIGKIPLELQFSSKGKKAKVNHLEQARLSQYVGQLNAILFAPEDLSLVKGSPALRRHFMDREFSQMSSKYLYNAGQYRTLLRQKNKYLKQLKYRQQTDRVLLGVLSDQLAAFGAEVIIARQHFLKHLEGWAADLHQEISLNKESLRLEYVNQLKVSDDTTVEEAYQALFKLYQDNEQREIEQGTTIYGPHRDDIRFLVNDKNVQAFGSQGQQRTTALSVKLAEIDLMKEQTGEYPLLLLDDVLSELDTIRQTHLLTAIQNKVQTFLTTTSLSDVARQLINEPTIFEIEHGTLNKEEVK</sequence>